<organism>
    <name type="scientific">Homo sapiens</name>
    <name type="common">Human</name>
    <dbReference type="NCBI Taxonomy" id="9606"/>
    <lineage>
        <taxon>Eukaryota</taxon>
        <taxon>Metazoa</taxon>
        <taxon>Chordata</taxon>
        <taxon>Craniata</taxon>
        <taxon>Vertebrata</taxon>
        <taxon>Euteleostomi</taxon>
        <taxon>Mammalia</taxon>
        <taxon>Eutheria</taxon>
        <taxon>Euarchontoglires</taxon>
        <taxon>Primates</taxon>
        <taxon>Haplorrhini</taxon>
        <taxon>Catarrhini</taxon>
        <taxon>Hominidae</taxon>
        <taxon>Homo</taxon>
    </lineage>
</organism>
<feature type="chain" id="PRO_0000212324" description="Protein arginine N-methyltransferase 2">
    <location>
        <begin position="1"/>
        <end position="433"/>
    </location>
</feature>
<feature type="domain" description="SH3" evidence="2">
    <location>
        <begin position="30"/>
        <end position="89"/>
    </location>
</feature>
<feature type="domain" description="SAM-dependent MTase PRMT-type" evidence="3">
    <location>
        <begin position="99"/>
        <end position="432"/>
    </location>
</feature>
<feature type="region of interest" description="Interaction with ESR1">
    <location>
        <begin position="1"/>
        <end position="277"/>
    </location>
</feature>
<feature type="region of interest" description="Disordered" evidence="4">
    <location>
        <begin position="1"/>
        <end position="20"/>
    </location>
</feature>
<feature type="region of interest" description="Interaction with RB1" evidence="1">
    <location>
        <begin position="83"/>
        <end position="207"/>
    </location>
</feature>
<feature type="region of interest" description="Interaction with ESR1">
    <location>
        <begin position="133"/>
        <end position="275"/>
    </location>
</feature>
<feature type="active site" evidence="1">
    <location>
        <position position="211"/>
    </location>
</feature>
<feature type="active site" evidence="1">
    <location>
        <position position="220"/>
    </location>
</feature>
<feature type="binding site" evidence="1">
    <location>
        <position position="112"/>
    </location>
    <ligand>
        <name>S-adenosyl-L-methionine</name>
        <dbReference type="ChEBI" id="CHEBI:59789"/>
    </ligand>
</feature>
<feature type="binding site" evidence="1">
    <location>
        <position position="121"/>
    </location>
    <ligand>
        <name>S-adenosyl-L-methionine</name>
        <dbReference type="ChEBI" id="CHEBI:59789"/>
    </ligand>
</feature>
<feature type="binding site" evidence="1">
    <location>
        <position position="145"/>
    </location>
    <ligand>
        <name>S-adenosyl-L-methionine</name>
        <dbReference type="ChEBI" id="CHEBI:59789"/>
    </ligand>
</feature>
<feature type="binding site" evidence="1">
    <location>
        <position position="168"/>
    </location>
    <ligand>
        <name>S-adenosyl-L-methionine</name>
        <dbReference type="ChEBI" id="CHEBI:59789"/>
    </ligand>
</feature>
<feature type="binding site" evidence="1">
    <location>
        <position position="197"/>
    </location>
    <ligand>
        <name>S-adenosyl-L-methionine</name>
        <dbReference type="ChEBI" id="CHEBI:59789"/>
    </ligand>
</feature>
<feature type="modified residue" description="Asymmetric dimethylarginine" evidence="18">
    <location>
        <position position="61"/>
    </location>
</feature>
<feature type="modified residue" description="Asymmetric dimethylarginine" evidence="18">
    <location>
        <position position="72"/>
    </location>
</feature>
<feature type="splice variant" id="VSP_042680" description="In isoform 2." evidence="16">
    <original>FEFMIESILYARDAWLKEDGVIWPTMAALHLVPCSADKDYRSKVLFWDNAYEFNLSALKSLAVKEFFSKPKYNHILKPEDCLSEPCTILQLDMRTVQISDLETLRGELRFDIRKAGTLHGFTAWFSVHFQSLQEGQPPQVLSTGPFHPTTHWKQTLFMMDDPVPVHTGDVVTGSVVLQRNPVWRRHMSVALSWAVTSRQDPTSQKVGEKVFPIWR</original>
    <variation>AAPLLSCRILPCTCASGPLHVLLACCLPLPCTCASVPLHVLLACCLPVLRAPQPSGLHLSWPIFLL</variation>
    <location>
        <begin position="219"/>
        <end position="433"/>
    </location>
</feature>
<feature type="splice variant" id="VSP_054927" description="In isoform PRMT2Gamma." evidence="15">
    <location>
        <begin position="219"/>
        <end position="423"/>
    </location>
</feature>
<feature type="splice variant" id="VSP_043381" description="In isoform 3." evidence="13">
    <location>
        <begin position="219"/>
        <end position="320"/>
    </location>
</feature>
<feature type="splice variant" id="VSP_054928" description="In isoform PRMT2Beta." evidence="15">
    <original>FEFMIESILYARDAWLKEDGVIWPTMAALHLVPCSADKDYRSKVLFWDNAYEFNLSALKSLAVKEFFSKPKYNHILKPEDCLS</original>
    <variation>HHTLEADAVHDGRPSPCPYRRRGHGFSCVAEKPSVEKAHVCGSELGCHFQTRPHISKSWRKSLPHLEMTVDALFGKQCAYLEG</variation>
    <location>
        <begin position="219"/>
        <end position="301"/>
    </location>
</feature>
<feature type="splice variant" id="VSP_054929" description="In isoform PRMT2L2." evidence="14">
    <location>
        <begin position="278"/>
        <end position="433"/>
    </location>
</feature>
<feature type="splice variant" id="VSP_054930" description="In isoform PRMT2Alpha." evidence="15">
    <original>SLAVKEFFSKPK</original>
    <variation>LEKKSSPSGDDS</variation>
    <location>
        <begin position="278"/>
        <end position="289"/>
    </location>
</feature>
<feature type="splice variant" id="VSP_054931" description="In isoform PRMT2Alpha." evidence="15">
    <location>
        <begin position="290"/>
        <end position="433"/>
    </location>
</feature>
<feature type="splice variant" id="VSP_054932" description="In isoform PRMT2Beta." evidence="15">
    <location>
        <begin position="302"/>
        <end position="433"/>
    </location>
</feature>
<feature type="sequence conflict" description="In Ref. 2; AAB48437." evidence="17" ref="2">
    <original>KDYRS</original>
    <variation>RIIVA</variation>
    <location>
        <begin position="256"/>
        <end position="260"/>
    </location>
</feature>
<feature type="sequence conflict" description="In Ref. 10; AAH00727." evidence="17" ref="10">
    <original>R</original>
    <variation>I</variation>
    <location>
        <position position="402"/>
    </location>
</feature>
<feature type="strand" evidence="19">
    <location>
        <begin position="34"/>
        <end position="39"/>
    </location>
</feature>
<feature type="strand" evidence="19">
    <location>
        <begin position="56"/>
        <end position="61"/>
    </location>
</feature>
<feature type="strand" evidence="19">
    <location>
        <begin position="64"/>
        <end position="71"/>
    </location>
</feature>
<feature type="strand" evidence="19">
    <location>
        <begin position="77"/>
        <end position="85"/>
    </location>
</feature>
<comment type="function">
    <text evidence="6 7 8 10">Arginine methyltransferase that methylates the guanidino nitrogens of arginyl residues in proteins such as STAT3, FBL, histone H4. Acts as a coactivator (with NCOA2) of the androgen receptor (AR)-mediated transactivation. Acts as a coactivator (with estrogen) of estrogen receptor (ER)-mediated transactivation. Enhances PGR, PPARG, RARA-mediated transactivation. May inhibit NF-kappa-B transcription and promote apoptosis. Represses E2F1 transcriptional activity (in a RB1-dependent manner). May be involved in growth regulation.</text>
</comment>
<comment type="catalytic activity">
    <reaction evidence="10">
        <text>L-arginyl-[protein] + 2 S-adenosyl-L-methionine = N(omega),N(omega)-dimethyl-L-arginyl-[protein] + 2 S-adenosyl-L-homocysteine + 2 H(+)</text>
        <dbReference type="Rhea" id="RHEA:48096"/>
        <dbReference type="Rhea" id="RHEA-COMP:10532"/>
        <dbReference type="Rhea" id="RHEA-COMP:11991"/>
        <dbReference type="ChEBI" id="CHEBI:15378"/>
        <dbReference type="ChEBI" id="CHEBI:29965"/>
        <dbReference type="ChEBI" id="CHEBI:57856"/>
        <dbReference type="ChEBI" id="CHEBI:59789"/>
        <dbReference type="ChEBI" id="CHEBI:61897"/>
        <dbReference type="EC" id="2.1.1.319"/>
    </reaction>
</comment>
<comment type="biophysicochemical properties">
    <kinetics>
        <KM evidence="10">2.6 uM for AdoMet</KM>
        <KM evidence="10">3.3 uM for H4</KM>
        <Vmax evidence="10">1.4 pmol/min/mg enzyme toward S-adenosyl-L-methionine (AdoMet)</Vmax>
        <Vmax evidence="10">1.5 pmol/min/mg enzyme toward histone H4</Vmax>
    </kinetics>
</comment>
<comment type="subunit">
    <text evidence="1 5 6 7 8 9 12">Self-associates. Interacts with RB1 and E2F1 (By similarity). Interacts with NCOA6 coactivator. Interacts (via SH3 domain) with PRMT8. Interacts with AR. Interacts with NFKBIA. Interacts with ESR1, ESR2, PGR, PPARG, RARA, RXRA and THRB. Interacts with HNRNPUL1.</text>
</comment>
<comment type="interaction">
    <interactant intactId="EBI-78458">
        <id>P55345</id>
    </interactant>
    <interactant intactId="EBI-744027">
        <id>Q13191</id>
        <label>CBLB</label>
    </interactant>
    <organismsDiffer>false</organismsDiffer>
    <experiments>3</experiments>
</comment>
<comment type="interaction">
    <interactant intactId="EBI-78458">
        <id>P55345</id>
    </interactant>
    <interactant intactId="EBI-78473">
        <id>P03372</id>
        <label>ESR1</label>
    </interactant>
    <organismsDiffer>false</organismsDiffer>
    <experiments>9</experiments>
</comment>
<comment type="interaction">
    <interactant intactId="EBI-78458">
        <id>P55345</id>
    </interactant>
    <interactant intactId="EBI-466029">
        <id>P42858</id>
        <label>HTT</label>
    </interactant>
    <organismsDiffer>false</organismsDiffer>
    <experiments>5</experiments>
</comment>
<comment type="interaction">
    <interactant intactId="EBI-78458">
        <id>P55345</id>
    </interactant>
    <interactant intactId="EBI-491274">
        <id>P06400</id>
        <label>RB1</label>
    </interactant>
    <organismsDiffer>false</organismsDiffer>
    <experiments>3</experiments>
</comment>
<comment type="interaction">
    <interactant intactId="EBI-78458">
        <id>P55345</id>
    </interactant>
    <interactant intactId="EBI-310707">
        <id>Q9NTZ6</id>
        <label>RBM12</label>
    </interactant>
    <organismsDiffer>false</organismsDiffer>
    <experiments>3</experiments>
</comment>
<comment type="interaction">
    <interactant intactId="EBI-78458">
        <id>P55345</id>
    </interactant>
    <interactant intactId="EBI-744603">
        <id>Q15637</id>
        <label>SF1</label>
    </interactant>
    <organismsDiffer>false</organismsDiffer>
    <experiments>5</experiments>
</comment>
<comment type="interaction">
    <interactant intactId="EBI-78458">
        <id>P55345</id>
    </interactant>
    <interactant intactId="EBI-1752330">
        <id>Q9BYB0</id>
        <label>SHANK3</label>
    </interactant>
    <organismsDiffer>false</organismsDiffer>
    <experiments>4</experiments>
</comment>
<comment type="subcellular location">
    <molecule>Isoform 1</molecule>
    <subcellularLocation>
        <location>Cytoplasm</location>
    </subcellularLocation>
    <subcellularLocation>
        <location>Nucleus</location>
    </subcellularLocation>
    <text>Translocates from the cytoplasm to the nucleus, after hormone exposure. Excluded from nucleolus.</text>
</comment>
<comment type="subcellular location">
    <molecule>Isoform PRMT2Alpha</molecule>
    <subcellularLocation>
        <location>Nucleus</location>
    </subcellularLocation>
    <text>Excluded from nucleolus.</text>
</comment>
<comment type="subcellular location">
    <molecule>Isoform PRMT2Beta</molecule>
    <subcellularLocation>
        <location>Cytoplasm</location>
    </subcellularLocation>
    <subcellularLocation>
        <location>Nucleus</location>
    </subcellularLocation>
    <subcellularLocation>
        <location>Nucleus</location>
        <location>Nucleolus</location>
    </subcellularLocation>
</comment>
<comment type="subcellular location">
    <molecule>Isoform PRMT2Gamma</molecule>
    <subcellularLocation>
        <location>Nucleus</location>
    </subcellularLocation>
    <text>Excluded from nucleolus.</text>
</comment>
<comment type="subcellular location">
    <molecule>Isoform PRMT2L2</molecule>
    <subcellularLocation>
        <location evidence="11">Cytoplasm</location>
    </subcellularLocation>
    <subcellularLocation>
        <location evidence="11">Nucleus</location>
    </subcellularLocation>
    <text>Predominantly cytoplasmic.</text>
</comment>
<comment type="alternative products">
    <event type="alternative splicing"/>
    <isoform>
        <id>P55345-1</id>
        <name>1</name>
        <sequence type="displayed"/>
    </isoform>
    <isoform>
        <id>P55345-2</id>
        <name>2</name>
        <sequence type="described" ref="VSP_042680"/>
    </isoform>
    <isoform>
        <id>P55345-3</id>
        <name>3</name>
        <sequence type="described" ref="VSP_043381"/>
    </isoform>
    <isoform>
        <id>P55345-4</id>
        <name>PRMT2Alpha</name>
        <sequence type="described" ref="VSP_054930 VSP_054931"/>
    </isoform>
    <isoform>
        <id>P55345-5</id>
        <name>PRMT2Beta</name>
        <sequence type="described" ref="VSP_054928 VSP_054932"/>
    </isoform>
    <isoform>
        <id>P55345-6</id>
        <name>PRMT2Gamma</name>
        <sequence type="described" ref="VSP_054927"/>
    </isoform>
    <isoform>
        <id>P55345-7</id>
        <name>PRMT2L2</name>
        <sequence type="described" ref="VSP_054929"/>
    </isoform>
</comment>
<comment type="tissue specificity">
    <text evidence="8">Widely expressed. Highly expressed in androgen target organs such as heart, prostate, skeletal muscle, ovary and spinal cord.</text>
</comment>
<comment type="miscellaneous">
    <molecule>Isoform PRMT2Alpha</molecule>
    <text evidence="17">Higher expression in breast cancer tissues.</text>
</comment>
<comment type="miscellaneous">
    <molecule>Isoform PRMT2Beta</molecule>
    <text evidence="17">Higher expression in breast cancer tissues. Doesn't interact with ESR1.</text>
</comment>
<comment type="miscellaneous">
    <molecule>Isoform PRMT2Gamma</molecule>
    <text evidence="17">Higher expression in breast cancer tissues.</text>
</comment>
<comment type="similarity">
    <text evidence="3">Belongs to the class I-like SAM-binding methyltransferase superfamily. Protein arginine N-methyltransferase family.</text>
</comment>
<evidence type="ECO:0000250" key="1"/>
<evidence type="ECO:0000255" key="2">
    <source>
        <dbReference type="PROSITE-ProRule" id="PRU00192"/>
    </source>
</evidence>
<evidence type="ECO:0000255" key="3">
    <source>
        <dbReference type="PROSITE-ProRule" id="PRU01015"/>
    </source>
</evidence>
<evidence type="ECO:0000256" key="4">
    <source>
        <dbReference type="SAM" id="MobiDB-lite"/>
    </source>
</evidence>
<evidence type="ECO:0000269" key="5">
    <source>
    </source>
</evidence>
<evidence type="ECO:0000269" key="6">
    <source>
    </source>
</evidence>
<evidence type="ECO:0000269" key="7">
    <source>
    </source>
</evidence>
<evidence type="ECO:0000269" key="8">
    <source>
    </source>
</evidence>
<evidence type="ECO:0000269" key="9">
    <source>
    </source>
</evidence>
<evidence type="ECO:0000269" key="10">
    <source>
    </source>
</evidence>
<evidence type="ECO:0000269" key="11">
    <source>
    </source>
</evidence>
<evidence type="ECO:0000269" key="12">
    <source>
    </source>
</evidence>
<evidence type="ECO:0000303" key="13">
    <source>
    </source>
</evidence>
<evidence type="ECO:0000303" key="14">
    <source>
    </source>
</evidence>
<evidence type="ECO:0000303" key="15">
    <source>
    </source>
</evidence>
<evidence type="ECO:0000303" key="16">
    <source>
    </source>
</evidence>
<evidence type="ECO:0000305" key="17"/>
<evidence type="ECO:0007744" key="18">
    <source>
    </source>
</evidence>
<evidence type="ECO:0007829" key="19">
    <source>
        <dbReference type="PDB" id="1X2P"/>
    </source>
</evidence>
<protein>
    <recommendedName>
        <fullName>Protein arginine N-methyltransferase 2</fullName>
        <ecNumber evidence="10">2.1.1.319</ecNumber>
    </recommendedName>
    <alternativeName>
        <fullName>Histone-arginine N-methyltransferase PRMT2</fullName>
    </alternativeName>
</protein>
<sequence>MATSGDCPRSESQGEEPAECSEAGLLQEGVQPEEFVAIADYAATDETQLSFLRGEKILILRQTTADWWWGERAGCCGYIPANHVGKHVDEYDPEDTWQDEEYFGSYGTLKLHLEMLADQPRTTKYHSVILQNKESLTDKVILDVGCGTGIISLFCAHYARPRAVYAVEASEMAQHTGQLVLQNGFADIITVYQQKVEDVVLPEKVDVLVSEWMGTCLLFEFMIESILYARDAWLKEDGVIWPTMAALHLVPCSADKDYRSKVLFWDNAYEFNLSALKSLAVKEFFSKPKYNHILKPEDCLSEPCTILQLDMRTVQISDLETLRGELRFDIRKAGTLHGFTAWFSVHFQSLQEGQPPQVLSTGPFHPTTHWKQTLFMMDDPVPVHTGDVVTGSVVLQRNPVWRRHMSVALSWAVTSRQDPTSQKVGEKVFPIWR</sequence>
<gene>
    <name type="primary">PRMT2</name>
    <name type="synonym">HMT1</name>
    <name type="synonym">HRMT1L1</name>
</gene>
<keyword id="KW-0002">3D-structure</keyword>
<keyword id="KW-0025">Alternative splicing</keyword>
<keyword id="KW-0963">Cytoplasm</keyword>
<keyword id="KW-0488">Methylation</keyword>
<keyword id="KW-0489">Methyltransferase</keyword>
<keyword id="KW-0539">Nucleus</keyword>
<keyword id="KW-1267">Proteomics identification</keyword>
<keyword id="KW-1185">Reference proteome</keyword>
<keyword id="KW-0949">S-adenosyl-L-methionine</keyword>
<keyword id="KW-0728">SH3 domain</keyword>
<keyword id="KW-0808">Transferase</keyword>
<name>ANM2_HUMAN</name>
<proteinExistence type="evidence at protein level"/>
<reference key="1">
    <citation type="journal article" date="1998" name="Genomics">
        <title>Identification and characterization of two putative human arginine methyltransferases (HRMT1L1 and HRMT1L2).</title>
        <authorList>
            <person name="Scott H.S."/>
            <person name="Antonarakis S.E."/>
            <person name="Lalioti M.D."/>
            <person name="Rossier C."/>
            <person name="Silver P.A."/>
            <person name="Henry M.F."/>
        </authorList>
    </citation>
    <scope>NUCLEOTIDE SEQUENCE [MRNA] (ISOFORM 1)</scope>
</reference>
<reference key="2">
    <citation type="journal article" date="1997" name="Mamm. Genome">
        <title>Identification and mapping of a novel human gene, HRMT1L1, homologous to the rat protein arginine N-methyltransferase 1 (PRMT1) gene.</title>
        <authorList>
            <person name="Katsanis N."/>
            <person name="Yaspo M.-L."/>
            <person name="Fisher E.M.C."/>
        </authorList>
    </citation>
    <scope>NUCLEOTIDE SEQUENCE [MRNA] (ISOFORM 1)</scope>
</reference>
<reference key="3">
    <citation type="journal article" date="2011" name="Gene">
        <title>Identification and expression analysis of a novel transcript of the human PRMT2 gene resulted from alternative polyadenylation in breast cancer.</title>
        <authorList>
            <person name="Zhong J."/>
            <person name="Cao R.X."/>
            <person name="Hong T."/>
            <person name="Yang J."/>
            <person name="Zu X.Y."/>
            <person name="Xiao X.H."/>
            <person name="Liu J.H."/>
            <person name="Wen G.B."/>
        </authorList>
    </citation>
    <scope>NUCLEOTIDE SEQUENCE [MRNA] (ISOFORM PRMT2L2)</scope>
    <scope>SUBCELLULAR LOCATION (ISOFORM PRMT2L2)</scope>
</reference>
<reference key="4">
    <citation type="journal article" date="2012" name="FEBS J.">
        <title>Identification and characterization of novel spliced variants of PRMT2 in breast carcinoma.</title>
        <authorList>
            <person name="Zhong J."/>
            <person name="Cao R.X."/>
            <person name="Zu X.Y."/>
            <person name="Hong T."/>
            <person name="Yang J."/>
            <person name="Liu L."/>
            <person name="Xiao X.H."/>
            <person name="Ding W.J."/>
            <person name="Zhao Q."/>
            <person name="Liu J.H."/>
            <person name="Wen G.B."/>
        </authorList>
    </citation>
    <scope>NUCLEOTIDE SEQUENCE [MRNA] (ISOFORMS PRMT2ALPHA; PRMT2BETA AND PRMT2GAMMA)</scope>
    <scope>SUBCELLULAR LOCATION</scope>
    <scope>INTERACTION WITH AR AND ESR1</scope>
</reference>
<reference key="5">
    <citation type="journal article" date="1997" name="Genome Res.">
        <title>Large-scale concatenation cDNA sequencing.</title>
        <authorList>
            <person name="Yu W."/>
            <person name="Andersson B."/>
            <person name="Worley K.C."/>
            <person name="Muzny D.M."/>
            <person name="Ding Y."/>
            <person name="Liu W."/>
            <person name="Ricafrente J.Y."/>
            <person name="Wentland M.A."/>
            <person name="Lennon G."/>
            <person name="Gibbs R.A."/>
        </authorList>
    </citation>
    <scope>NUCLEOTIDE SEQUENCE [LARGE SCALE MRNA] (ISOFORM 2)</scope>
    <source>
        <tissue>Brain</tissue>
    </source>
</reference>
<reference key="6">
    <citation type="submission" date="2004-06" db="EMBL/GenBank/DDBJ databases">
        <title>Cloning of human full open reading frames in Gateway(TM) system entry vector (pDONR201).</title>
        <authorList>
            <person name="Ebert L."/>
            <person name="Schick M."/>
            <person name="Neubert P."/>
            <person name="Schatten R."/>
            <person name="Henze S."/>
            <person name="Korn B."/>
        </authorList>
    </citation>
    <scope>NUCLEOTIDE SEQUENCE [LARGE SCALE MRNA] (ISOFORM 1)</scope>
</reference>
<reference key="7">
    <citation type="journal article" date="2004" name="Nat. Genet.">
        <title>Complete sequencing and characterization of 21,243 full-length human cDNAs.</title>
        <authorList>
            <person name="Ota T."/>
            <person name="Suzuki Y."/>
            <person name="Nishikawa T."/>
            <person name="Otsuki T."/>
            <person name="Sugiyama T."/>
            <person name="Irie R."/>
            <person name="Wakamatsu A."/>
            <person name="Hayashi K."/>
            <person name="Sato H."/>
            <person name="Nagai K."/>
            <person name="Kimura K."/>
            <person name="Makita H."/>
            <person name="Sekine M."/>
            <person name="Obayashi M."/>
            <person name="Nishi T."/>
            <person name="Shibahara T."/>
            <person name="Tanaka T."/>
            <person name="Ishii S."/>
            <person name="Yamamoto J."/>
            <person name="Saito K."/>
            <person name="Kawai Y."/>
            <person name="Isono Y."/>
            <person name="Nakamura Y."/>
            <person name="Nagahari K."/>
            <person name="Murakami K."/>
            <person name="Yasuda T."/>
            <person name="Iwayanagi T."/>
            <person name="Wagatsuma M."/>
            <person name="Shiratori A."/>
            <person name="Sudo H."/>
            <person name="Hosoiri T."/>
            <person name="Kaku Y."/>
            <person name="Kodaira H."/>
            <person name="Kondo H."/>
            <person name="Sugawara M."/>
            <person name="Takahashi M."/>
            <person name="Kanda K."/>
            <person name="Yokoi T."/>
            <person name="Furuya T."/>
            <person name="Kikkawa E."/>
            <person name="Omura Y."/>
            <person name="Abe K."/>
            <person name="Kamihara K."/>
            <person name="Katsuta N."/>
            <person name="Sato K."/>
            <person name="Tanikawa M."/>
            <person name="Yamazaki M."/>
            <person name="Ninomiya K."/>
            <person name="Ishibashi T."/>
            <person name="Yamashita H."/>
            <person name="Murakawa K."/>
            <person name="Fujimori K."/>
            <person name="Tanai H."/>
            <person name="Kimata M."/>
            <person name="Watanabe M."/>
            <person name="Hiraoka S."/>
            <person name="Chiba Y."/>
            <person name="Ishida S."/>
            <person name="Ono Y."/>
            <person name="Takiguchi S."/>
            <person name="Watanabe S."/>
            <person name="Yosida M."/>
            <person name="Hotuta T."/>
            <person name="Kusano J."/>
            <person name="Kanehori K."/>
            <person name="Takahashi-Fujii A."/>
            <person name="Hara H."/>
            <person name="Tanase T.-O."/>
            <person name="Nomura Y."/>
            <person name="Togiya S."/>
            <person name="Komai F."/>
            <person name="Hara R."/>
            <person name="Takeuchi K."/>
            <person name="Arita M."/>
            <person name="Imose N."/>
            <person name="Musashino K."/>
            <person name="Yuuki H."/>
            <person name="Oshima A."/>
            <person name="Sasaki N."/>
            <person name="Aotsuka S."/>
            <person name="Yoshikawa Y."/>
            <person name="Matsunawa H."/>
            <person name="Ichihara T."/>
            <person name="Shiohata N."/>
            <person name="Sano S."/>
            <person name="Moriya S."/>
            <person name="Momiyama H."/>
            <person name="Satoh N."/>
            <person name="Takami S."/>
            <person name="Terashima Y."/>
            <person name="Suzuki O."/>
            <person name="Nakagawa S."/>
            <person name="Senoh A."/>
            <person name="Mizoguchi H."/>
            <person name="Goto Y."/>
            <person name="Shimizu F."/>
            <person name="Wakebe H."/>
            <person name="Hishigaki H."/>
            <person name="Watanabe T."/>
            <person name="Sugiyama A."/>
            <person name="Takemoto M."/>
            <person name="Kawakami B."/>
            <person name="Yamazaki M."/>
            <person name="Watanabe K."/>
            <person name="Kumagai A."/>
            <person name="Itakura S."/>
            <person name="Fukuzumi Y."/>
            <person name="Fujimori Y."/>
            <person name="Komiyama M."/>
            <person name="Tashiro H."/>
            <person name="Tanigami A."/>
            <person name="Fujiwara T."/>
            <person name="Ono T."/>
            <person name="Yamada K."/>
            <person name="Fujii Y."/>
            <person name="Ozaki K."/>
            <person name="Hirao M."/>
            <person name="Ohmori Y."/>
            <person name="Kawabata A."/>
            <person name="Hikiji T."/>
            <person name="Kobatake N."/>
            <person name="Inagaki H."/>
            <person name="Ikema Y."/>
            <person name="Okamoto S."/>
            <person name="Okitani R."/>
            <person name="Kawakami T."/>
            <person name="Noguchi S."/>
            <person name="Itoh T."/>
            <person name="Shigeta K."/>
            <person name="Senba T."/>
            <person name="Matsumura K."/>
            <person name="Nakajima Y."/>
            <person name="Mizuno T."/>
            <person name="Morinaga M."/>
            <person name="Sasaki M."/>
            <person name="Togashi T."/>
            <person name="Oyama M."/>
            <person name="Hata H."/>
            <person name="Watanabe M."/>
            <person name="Komatsu T."/>
            <person name="Mizushima-Sugano J."/>
            <person name="Satoh T."/>
            <person name="Shirai Y."/>
            <person name="Takahashi Y."/>
            <person name="Nakagawa K."/>
            <person name="Okumura K."/>
            <person name="Nagase T."/>
            <person name="Nomura N."/>
            <person name="Kikuchi H."/>
            <person name="Masuho Y."/>
            <person name="Yamashita R."/>
            <person name="Nakai K."/>
            <person name="Yada T."/>
            <person name="Nakamura Y."/>
            <person name="Ohara O."/>
            <person name="Isogai T."/>
            <person name="Sugano S."/>
        </authorList>
    </citation>
    <scope>NUCLEOTIDE SEQUENCE [LARGE SCALE MRNA] (ISOFORM 1)</scope>
    <source>
        <tissue>Brain</tissue>
    </source>
</reference>
<reference key="8">
    <citation type="journal article" date="2000" name="Nature">
        <title>The DNA sequence of human chromosome 21.</title>
        <authorList>
            <person name="Hattori M."/>
            <person name="Fujiyama A."/>
            <person name="Taylor T.D."/>
            <person name="Watanabe H."/>
            <person name="Yada T."/>
            <person name="Park H.-S."/>
            <person name="Toyoda A."/>
            <person name="Ishii K."/>
            <person name="Totoki Y."/>
            <person name="Choi D.-K."/>
            <person name="Groner Y."/>
            <person name="Soeda E."/>
            <person name="Ohki M."/>
            <person name="Takagi T."/>
            <person name="Sakaki Y."/>
            <person name="Taudien S."/>
            <person name="Blechschmidt K."/>
            <person name="Polley A."/>
            <person name="Menzel U."/>
            <person name="Delabar J."/>
            <person name="Kumpf K."/>
            <person name="Lehmann R."/>
            <person name="Patterson D."/>
            <person name="Reichwald K."/>
            <person name="Rump A."/>
            <person name="Schillhabel M."/>
            <person name="Schudy A."/>
            <person name="Zimmermann W."/>
            <person name="Rosenthal A."/>
            <person name="Kudoh J."/>
            <person name="Shibuya K."/>
            <person name="Kawasaki K."/>
            <person name="Asakawa S."/>
            <person name="Shintani A."/>
            <person name="Sasaki T."/>
            <person name="Nagamine K."/>
            <person name="Mitsuyama S."/>
            <person name="Antonarakis S.E."/>
            <person name="Minoshima S."/>
            <person name="Shimizu N."/>
            <person name="Nordsiek G."/>
            <person name="Hornischer K."/>
            <person name="Brandt P."/>
            <person name="Scharfe M."/>
            <person name="Schoen O."/>
            <person name="Desario A."/>
            <person name="Reichelt J."/>
            <person name="Kauer G."/>
            <person name="Bloecker H."/>
            <person name="Ramser J."/>
            <person name="Beck A."/>
            <person name="Klages S."/>
            <person name="Hennig S."/>
            <person name="Riesselmann L."/>
            <person name="Dagand E."/>
            <person name="Wehrmeyer S."/>
            <person name="Borzym K."/>
            <person name="Gardiner K."/>
            <person name="Nizetic D."/>
            <person name="Francis F."/>
            <person name="Lehrach H."/>
            <person name="Reinhardt R."/>
            <person name="Yaspo M.-L."/>
        </authorList>
    </citation>
    <scope>NUCLEOTIDE SEQUENCE [LARGE SCALE GENOMIC DNA]</scope>
</reference>
<reference key="9">
    <citation type="submission" date="2005-09" db="EMBL/GenBank/DDBJ databases">
        <authorList>
            <person name="Mural R.J."/>
            <person name="Istrail S."/>
            <person name="Sutton G."/>
            <person name="Florea L."/>
            <person name="Halpern A.L."/>
            <person name="Mobarry C.M."/>
            <person name="Lippert R."/>
            <person name="Walenz B."/>
            <person name="Shatkay H."/>
            <person name="Dew I."/>
            <person name="Miller J.R."/>
            <person name="Flanigan M.J."/>
            <person name="Edwards N.J."/>
            <person name="Bolanos R."/>
            <person name="Fasulo D."/>
            <person name="Halldorsson B.V."/>
            <person name="Hannenhalli S."/>
            <person name="Turner R."/>
            <person name="Yooseph S."/>
            <person name="Lu F."/>
            <person name="Nusskern D.R."/>
            <person name="Shue B.C."/>
            <person name="Zheng X.H."/>
            <person name="Zhong F."/>
            <person name="Delcher A.L."/>
            <person name="Huson D.H."/>
            <person name="Kravitz S.A."/>
            <person name="Mouchard L."/>
            <person name="Reinert K."/>
            <person name="Remington K.A."/>
            <person name="Clark A.G."/>
            <person name="Waterman M.S."/>
            <person name="Eichler E.E."/>
            <person name="Adams M.D."/>
            <person name="Hunkapiller M.W."/>
            <person name="Myers E.W."/>
            <person name="Venter J.C."/>
        </authorList>
    </citation>
    <scope>NUCLEOTIDE SEQUENCE [LARGE SCALE GENOMIC DNA]</scope>
</reference>
<reference key="10">
    <citation type="journal article" date="2004" name="Genome Res.">
        <title>The status, quality, and expansion of the NIH full-length cDNA project: the Mammalian Gene Collection (MGC).</title>
        <authorList>
            <consortium name="The MGC Project Team"/>
        </authorList>
    </citation>
    <scope>NUCLEOTIDE SEQUENCE [LARGE SCALE MRNA] (ISOFORMS 1 AND 3)</scope>
    <source>
        <tissue>Chondrosarcoma</tissue>
        <tissue>Kidney</tissue>
    </source>
</reference>
<reference key="11">
    <citation type="submission" date="1999-08" db="EMBL/GenBank/DDBJ databases">
        <authorList>
            <consortium name="The European IMAGE consortium"/>
        </authorList>
    </citation>
    <scope>NUCLEOTIDE SEQUENCE [LARGE SCALE MRNA] OF 147-277 (ISOFORM 1)</scope>
</reference>
<reference key="12">
    <citation type="journal article" date="2001" name="Biochem. J.">
        <title>Heterogeneous nuclear ribonucleoprotein E1B-AP5 is methylated in its Arg-Gly-Gly (RGG) box and interacts with human arginine methyltransferase HRMT1L1.</title>
        <authorList>
            <person name="Kzhyshkowska J."/>
            <person name="Schuett H."/>
            <person name="Liss M."/>
            <person name="Kremmer E."/>
            <person name="Stauber R."/>
            <person name="Wolf H."/>
            <person name="Dobner T."/>
        </authorList>
    </citation>
    <scope>INTERACTION WITH HNRNPUL1</scope>
    <scope>SUBCELLULAR LOCATION</scope>
</reference>
<reference key="13">
    <citation type="journal article" date="2002" name="J. Biol. Chem.">
        <title>Identification of protein arginine methyltransferase 2 as a coactivator for estrogen receptor alpha.</title>
        <authorList>
            <person name="Qi C."/>
            <person name="Chang J."/>
            <person name="Zhu Y."/>
            <person name="Yeldandi A.V."/>
            <person name="Rao S.M."/>
            <person name="Zhu Y.-J."/>
        </authorList>
    </citation>
    <scope>FUNCTION</scope>
    <scope>INTERACTION WITH ESR1; ESR2; NCOA1; NCOA6; PGR; PPARG; RARA; RXRA AND THRB</scope>
</reference>
<reference key="14">
    <citation type="journal article" date="2006" name="Mol. Cell. Biol.">
        <title>Protein methyltransferase 2 inhibits NF-kappaB function and promotes apoptosis.</title>
        <authorList>
            <person name="Ganesh L."/>
            <person name="Yoshimoto T."/>
            <person name="Moorthy N.C."/>
            <person name="Akahata W."/>
            <person name="Boehm M."/>
            <person name="Nabel E.G."/>
            <person name="Nabel G.J."/>
        </authorList>
    </citation>
    <scope>FUNCTION</scope>
    <scope>INTERACTION WITH NFKBIA</scope>
</reference>
<reference key="15">
    <citation type="journal article" date="2007" name="J. Biol. Chem.">
        <title>Regulation of protein arginine methyltransferase 8 (PRMT8) activity by its N-terminal domain.</title>
        <authorList>
            <person name="Sayegh J."/>
            <person name="Webb K."/>
            <person name="Cheng D."/>
            <person name="Bedford M.T."/>
            <person name="Clarke S.G."/>
        </authorList>
    </citation>
    <scope>INTERACTION WITH PRMT8</scope>
</reference>
<reference key="16">
    <citation type="journal article" date="2007" name="J. Steroid Biochem. Mol. Biol.">
        <title>PRMT2, a member of the protein arginine methyltransferase family, is a coactivator of the androgen receptor.</title>
        <authorList>
            <person name="Meyer R."/>
            <person name="Wolf S.S."/>
            <person name="Obendorf M."/>
        </authorList>
    </citation>
    <scope>FUNCTION</scope>
    <scope>INTERACTION WITH AR AND ESR1</scope>
    <scope>SUBCELLULAR LOCATION</scope>
    <scope>TISSUE SPECIFICITY</scope>
</reference>
<reference key="17">
    <citation type="journal article" date="2009" name="Biochem. J.">
        <title>Kinetic analysis of human protein arginine N-methyltransferase 2: formation of monomethyl- and asymmetric dimethyl-arginine residues on histone H4.</title>
        <authorList>
            <person name="Lakowski T.M."/>
            <person name="Frankel A."/>
        </authorList>
    </citation>
    <scope>FUNCTION</scope>
    <scope>CATALYTIC ACTIVITY</scope>
    <scope>BIOPHYSICOCHEMICAL PROPERTIES</scope>
</reference>
<reference key="18">
    <citation type="journal article" date="2014" name="Mol. Cell. Proteomics">
        <title>Immunoaffinity enrichment and mass spectrometry analysis of protein methylation.</title>
        <authorList>
            <person name="Guo A."/>
            <person name="Gu H."/>
            <person name="Zhou J."/>
            <person name="Mulhern D."/>
            <person name="Wang Y."/>
            <person name="Lee K.A."/>
            <person name="Yang V."/>
            <person name="Aguiar M."/>
            <person name="Kornhauser J."/>
            <person name="Jia X."/>
            <person name="Ren J."/>
            <person name="Beausoleil S.A."/>
            <person name="Silva J.C."/>
            <person name="Vemulapalli V."/>
            <person name="Bedford M.T."/>
            <person name="Comb M.J."/>
        </authorList>
    </citation>
    <scope>METHYLATION [LARGE SCALE ANALYSIS] AT ARG-61 AND ARG-72</scope>
    <scope>IDENTIFICATION BY MASS SPECTROMETRY [LARGE SCALE ANALYSIS]</scope>
    <source>
        <tissue>Colon carcinoma</tissue>
    </source>
</reference>
<reference key="19">
    <citation type="submission" date="2005-10" db="PDB data bank">
        <title>Solution structure of the SH3 domain of the protein arginine N-methyltransferase 2.</title>
        <authorList>
            <consortium name="RIKEN structural genomics initiative (RSGI)"/>
        </authorList>
    </citation>
    <scope>STRUCTURE BY NMR OF 33-87</scope>
</reference>
<dbReference type="EC" id="2.1.1.319" evidence="10"/>
<dbReference type="EMBL" id="X99209">
    <property type="protein sequence ID" value="CAA67599.1"/>
    <property type="molecule type" value="mRNA"/>
</dbReference>
<dbReference type="EMBL" id="U80213">
    <property type="protein sequence ID" value="AAB48437.1"/>
    <property type="molecule type" value="mRNA"/>
</dbReference>
<dbReference type="EMBL" id="AY786414">
    <property type="protein sequence ID" value="AAV48568.2"/>
    <property type="molecule type" value="mRNA"/>
</dbReference>
<dbReference type="EMBL" id="FJ436410">
    <property type="protein sequence ID" value="ACJ66866.1"/>
    <property type="molecule type" value="mRNA"/>
</dbReference>
<dbReference type="EMBL" id="FJ436411">
    <property type="protein sequence ID" value="ACJ66867.1"/>
    <property type="molecule type" value="mRNA"/>
</dbReference>
<dbReference type="EMBL" id="FJ436412">
    <property type="protein sequence ID" value="ACJ66868.1"/>
    <property type="molecule type" value="mRNA"/>
</dbReference>
<dbReference type="EMBL" id="U79286">
    <property type="protein sequence ID" value="AAB50221.1"/>
    <property type="molecule type" value="mRNA"/>
</dbReference>
<dbReference type="EMBL" id="CR541804">
    <property type="protein sequence ID" value="CAG46603.1"/>
    <property type="molecule type" value="mRNA"/>
</dbReference>
<dbReference type="EMBL" id="AK123650">
    <property type="protein sequence ID" value="BAG53931.1"/>
    <property type="molecule type" value="mRNA"/>
</dbReference>
<dbReference type="EMBL" id="AP000339">
    <property type="status" value="NOT_ANNOTATED_CDS"/>
    <property type="molecule type" value="Genomic_DNA"/>
</dbReference>
<dbReference type="EMBL" id="AP000340">
    <property type="status" value="NOT_ANNOTATED_CDS"/>
    <property type="molecule type" value="Genomic_DNA"/>
</dbReference>
<dbReference type="EMBL" id="CH471079">
    <property type="protein sequence ID" value="EAX09259.1"/>
    <property type="molecule type" value="Genomic_DNA"/>
</dbReference>
<dbReference type="EMBL" id="CH471079">
    <property type="protein sequence ID" value="EAX09265.1"/>
    <property type="molecule type" value="Genomic_DNA"/>
</dbReference>
<dbReference type="EMBL" id="BC000727">
    <property type="protein sequence ID" value="AAH00727.1"/>
    <property type="molecule type" value="mRNA"/>
</dbReference>
<dbReference type="EMBL" id="BC100026">
    <property type="protein sequence ID" value="AAI00027.1"/>
    <property type="molecule type" value="mRNA"/>
</dbReference>
<dbReference type="EMBL" id="AL109794">
    <property type="protein sequence ID" value="CAB52454.1"/>
    <property type="molecule type" value="mRNA"/>
</dbReference>
<dbReference type="CCDS" id="CCDS13737.1">
    <molecule id="P55345-1"/>
</dbReference>
<dbReference type="CCDS" id="CCDS56219.1">
    <molecule id="P55345-2"/>
</dbReference>
<dbReference type="CCDS" id="CCDS56220.1">
    <molecule id="P55345-3"/>
</dbReference>
<dbReference type="CCDS" id="CCDS68230.1">
    <molecule id="P55345-4"/>
</dbReference>
<dbReference type="CCDS" id="CCDS68231.1">
    <molecule id="P55345-5"/>
</dbReference>
<dbReference type="CCDS" id="CCDS74806.1">
    <molecule id="P55345-6"/>
</dbReference>
<dbReference type="RefSeq" id="NP_001229793.1">
    <molecule id="P55345-3"/>
    <property type="nucleotide sequence ID" value="NM_001242864.3"/>
</dbReference>
<dbReference type="RefSeq" id="NP_001229794.1">
    <molecule id="P55345-2"/>
    <property type="nucleotide sequence ID" value="NM_001242865.3"/>
</dbReference>
<dbReference type="RefSeq" id="NP_001229795.1">
    <molecule id="P55345-7"/>
    <property type="nucleotide sequence ID" value="NM_001242866.3"/>
</dbReference>
<dbReference type="RefSeq" id="NP_001273605.1">
    <molecule id="P55345-5"/>
    <property type="nucleotide sequence ID" value="NM_001286676.2"/>
</dbReference>
<dbReference type="RefSeq" id="NP_001273606.1">
    <molecule id="P55345-4"/>
    <property type="nucleotide sequence ID" value="NM_001286677.2"/>
</dbReference>
<dbReference type="RefSeq" id="NP_001273607.1">
    <molecule id="P55345-6"/>
    <property type="nucleotide sequence ID" value="NM_001286678.2"/>
</dbReference>
<dbReference type="RefSeq" id="NP_001526.2">
    <molecule id="P55345-1"/>
    <property type="nucleotide sequence ID" value="NM_001535.4"/>
</dbReference>
<dbReference type="RefSeq" id="NP_996845.1">
    <molecule id="P55345-1"/>
    <property type="nucleotide sequence ID" value="NM_206962.4"/>
</dbReference>
<dbReference type="RefSeq" id="XP_005261168.1">
    <molecule id="P55345-1"/>
    <property type="nucleotide sequence ID" value="XM_005261111.5"/>
</dbReference>
<dbReference type="RefSeq" id="XP_006724061.1">
    <molecule id="P55345-5"/>
    <property type="nucleotide sequence ID" value="XM_006723998.5"/>
</dbReference>
<dbReference type="RefSeq" id="XP_006724063.1">
    <molecule id="P55345-6"/>
    <property type="nucleotide sequence ID" value="XM_006724000.4"/>
</dbReference>
<dbReference type="RefSeq" id="XP_047296715.1">
    <molecule id="P55345-5"/>
    <property type="nucleotide sequence ID" value="XM_047440759.1"/>
</dbReference>
<dbReference type="RefSeq" id="XP_054180436.1">
    <molecule id="P55345-1"/>
    <property type="nucleotide sequence ID" value="XM_054324461.1"/>
</dbReference>
<dbReference type="RefSeq" id="XP_054180437.1">
    <molecule id="P55345-5"/>
    <property type="nucleotide sequence ID" value="XM_054324462.1"/>
</dbReference>
<dbReference type="RefSeq" id="XP_054180438.1">
    <molecule id="P55345-5"/>
    <property type="nucleotide sequence ID" value="XM_054324463.1"/>
</dbReference>
<dbReference type="RefSeq" id="XP_054180442.1">
    <molecule id="P55345-6"/>
    <property type="nucleotide sequence ID" value="XM_054324467.1"/>
</dbReference>
<dbReference type="PDB" id="1X2P">
    <property type="method" value="NMR"/>
    <property type="chains" value="A=33-87"/>
</dbReference>
<dbReference type="PDBsum" id="1X2P"/>
<dbReference type="SMR" id="P55345"/>
<dbReference type="BioGRID" id="109511">
    <property type="interactions" value="85"/>
</dbReference>
<dbReference type="CORUM" id="P55345"/>
<dbReference type="FunCoup" id="P55345">
    <property type="interactions" value="2303"/>
</dbReference>
<dbReference type="IntAct" id="P55345">
    <property type="interactions" value="71"/>
</dbReference>
<dbReference type="MINT" id="P55345"/>
<dbReference type="STRING" id="9606.ENSP00000380759"/>
<dbReference type="GlyGen" id="P55345">
    <property type="glycosylation" value="1 site, 1 O-linked glycan (1 site)"/>
</dbReference>
<dbReference type="iPTMnet" id="P55345"/>
<dbReference type="PhosphoSitePlus" id="P55345"/>
<dbReference type="SwissPalm" id="P55345"/>
<dbReference type="BioMuta" id="PRMT2"/>
<dbReference type="DMDM" id="2499805"/>
<dbReference type="jPOST" id="P55345"/>
<dbReference type="MassIVE" id="P55345"/>
<dbReference type="PaxDb" id="9606-ENSP00000380759"/>
<dbReference type="PeptideAtlas" id="P55345"/>
<dbReference type="ProteomicsDB" id="56853">
    <molecule id="P55345-1"/>
</dbReference>
<dbReference type="ProteomicsDB" id="56854">
    <molecule id="P55345-2"/>
</dbReference>
<dbReference type="ProteomicsDB" id="56855">
    <molecule id="P55345-3"/>
</dbReference>
<dbReference type="ProteomicsDB" id="6261"/>
<dbReference type="ProteomicsDB" id="6262"/>
<dbReference type="ProteomicsDB" id="6263"/>
<dbReference type="Antibodypedia" id="10796">
    <property type="antibodies" value="479 antibodies from 30 providers"/>
</dbReference>
<dbReference type="DNASU" id="3275"/>
<dbReference type="Ensembl" id="ENST00000291705.11">
    <molecule id="P55345-6"/>
    <property type="protein sequence ID" value="ENSP00000291705.6"/>
    <property type="gene ID" value="ENSG00000160310.20"/>
</dbReference>
<dbReference type="Ensembl" id="ENST00000334494.8">
    <molecule id="P55345-2"/>
    <property type="protein sequence ID" value="ENSP00000335490.4"/>
    <property type="gene ID" value="ENSG00000160310.20"/>
</dbReference>
<dbReference type="Ensembl" id="ENST00000355680.8">
    <molecule id="P55345-1"/>
    <property type="protein sequence ID" value="ENSP00000347906.3"/>
    <property type="gene ID" value="ENSG00000160310.20"/>
</dbReference>
<dbReference type="Ensembl" id="ENST00000397637.5">
    <molecule id="P55345-1"/>
    <property type="protein sequence ID" value="ENSP00000380759.1"/>
    <property type="gene ID" value="ENSG00000160310.20"/>
</dbReference>
<dbReference type="Ensembl" id="ENST00000397638.7">
    <molecule id="P55345-1"/>
    <property type="protein sequence ID" value="ENSP00000380760.2"/>
    <property type="gene ID" value="ENSG00000160310.20"/>
</dbReference>
<dbReference type="Ensembl" id="ENST00000440086.5">
    <molecule id="P55345-3"/>
    <property type="protein sequence ID" value="ENSP00000397266.1"/>
    <property type="gene ID" value="ENSG00000160310.20"/>
</dbReference>
<dbReference type="Ensembl" id="ENST00000451211.6">
    <molecule id="P55345-4"/>
    <property type="protein sequence ID" value="ENSP00000411984.2"/>
    <property type="gene ID" value="ENSG00000160310.20"/>
</dbReference>
<dbReference type="Ensembl" id="ENST00000458387.6">
    <molecule id="P55345-5"/>
    <property type="protein sequence ID" value="ENSP00000407463.2"/>
    <property type="gene ID" value="ENSG00000160310.20"/>
</dbReference>
<dbReference type="GeneID" id="3275"/>
<dbReference type="KEGG" id="hsa:3275"/>
<dbReference type="MANE-Select" id="ENST00000355680.8">
    <property type="protein sequence ID" value="ENSP00000347906.3"/>
    <property type="RefSeq nucleotide sequence ID" value="NM_206962.4"/>
    <property type="RefSeq protein sequence ID" value="NP_996845.1"/>
</dbReference>
<dbReference type="UCSC" id="uc002zjx.5">
    <molecule id="P55345-1"/>
    <property type="organism name" value="human"/>
</dbReference>
<dbReference type="AGR" id="HGNC:5186"/>
<dbReference type="CTD" id="3275"/>
<dbReference type="DisGeNET" id="3275"/>
<dbReference type="GeneCards" id="PRMT2"/>
<dbReference type="HGNC" id="HGNC:5186">
    <property type="gene designation" value="PRMT2"/>
</dbReference>
<dbReference type="HPA" id="ENSG00000160310">
    <property type="expression patterns" value="Low tissue specificity"/>
</dbReference>
<dbReference type="MIM" id="601961">
    <property type="type" value="gene"/>
</dbReference>
<dbReference type="neXtProt" id="NX_P55345"/>
<dbReference type="OpenTargets" id="ENSG00000160310"/>
<dbReference type="PharmGKB" id="PA29460"/>
<dbReference type="VEuPathDB" id="HostDB:ENSG00000160310"/>
<dbReference type="eggNOG" id="KOG1499">
    <property type="taxonomic scope" value="Eukaryota"/>
</dbReference>
<dbReference type="GeneTree" id="ENSGT00940000160683"/>
<dbReference type="HOGENOM" id="CLU_017375_4_0_1"/>
<dbReference type="InParanoid" id="P55345"/>
<dbReference type="OMA" id="NSEPTHW"/>
<dbReference type="OrthoDB" id="7848332at2759"/>
<dbReference type="PAN-GO" id="P55345">
    <property type="GO annotations" value="0 GO annotations based on evolutionary models"/>
</dbReference>
<dbReference type="PhylomeDB" id="P55345"/>
<dbReference type="TreeFam" id="TF332196"/>
<dbReference type="BioCyc" id="MetaCyc:HS08486-MONOMER"/>
<dbReference type="BRENDA" id="2.1.1.319">
    <property type="organism ID" value="2681"/>
</dbReference>
<dbReference type="PathwayCommons" id="P55345"/>
<dbReference type="SABIO-RK" id="P55345"/>
<dbReference type="SignaLink" id="P55345"/>
<dbReference type="BioGRID-ORCS" id="3275">
    <property type="hits" value="29 hits in 1175 CRISPR screens"/>
</dbReference>
<dbReference type="ChiTaRS" id="PRMT2">
    <property type="organism name" value="human"/>
</dbReference>
<dbReference type="EvolutionaryTrace" id="P55345"/>
<dbReference type="GeneWiki" id="PRMT2"/>
<dbReference type="GenomeRNAi" id="3275"/>
<dbReference type="Pharos" id="P55345">
    <property type="development level" value="Tbio"/>
</dbReference>
<dbReference type="PRO" id="PR:P55345"/>
<dbReference type="Proteomes" id="UP000005640">
    <property type="component" value="Chromosome 21"/>
</dbReference>
<dbReference type="RNAct" id="P55345">
    <property type="molecule type" value="protein"/>
</dbReference>
<dbReference type="Bgee" id="ENSG00000160310">
    <property type="expression patterns" value="Expressed in cortical plate and 199 other cell types or tissues"/>
</dbReference>
<dbReference type="ExpressionAtlas" id="P55345">
    <property type="expression patterns" value="baseline and differential"/>
</dbReference>
<dbReference type="GO" id="GO:0005737">
    <property type="term" value="C:cytoplasm"/>
    <property type="evidence" value="ECO:0000314"/>
    <property type="project" value="UniProtKB"/>
</dbReference>
<dbReference type="GO" id="GO:0005829">
    <property type="term" value="C:cytosol"/>
    <property type="evidence" value="ECO:0000314"/>
    <property type="project" value="HPA"/>
</dbReference>
<dbReference type="GO" id="GO:0005730">
    <property type="term" value="C:nucleolus"/>
    <property type="evidence" value="ECO:0007669"/>
    <property type="project" value="UniProtKB-SubCell"/>
</dbReference>
<dbReference type="GO" id="GO:0005654">
    <property type="term" value="C:nucleoplasm"/>
    <property type="evidence" value="ECO:0000314"/>
    <property type="project" value="HPA"/>
</dbReference>
<dbReference type="GO" id="GO:0005634">
    <property type="term" value="C:nucleus"/>
    <property type="evidence" value="ECO:0000314"/>
    <property type="project" value="UniProtKB"/>
</dbReference>
<dbReference type="GO" id="GO:0140938">
    <property type="term" value="F:histone H3 methyltransferase activity"/>
    <property type="evidence" value="ECO:0000250"/>
    <property type="project" value="UniProtKB"/>
</dbReference>
<dbReference type="GO" id="GO:0140592">
    <property type="term" value="F:histone H3R8 methyltransferase activity"/>
    <property type="evidence" value="ECO:0000250"/>
    <property type="project" value="UniProtKB"/>
</dbReference>
<dbReference type="GO" id="GO:0042054">
    <property type="term" value="F:histone methyltransferase activity"/>
    <property type="evidence" value="ECO:0000314"/>
    <property type="project" value="UniProtKB"/>
</dbReference>
<dbReference type="GO" id="GO:0050681">
    <property type="term" value="F:nuclear androgen receptor binding"/>
    <property type="evidence" value="ECO:0000353"/>
    <property type="project" value="UniProtKB"/>
</dbReference>
<dbReference type="GO" id="GO:0030331">
    <property type="term" value="F:nuclear estrogen receptor binding"/>
    <property type="evidence" value="ECO:0000314"/>
    <property type="project" value="UniProtKB"/>
</dbReference>
<dbReference type="GO" id="GO:0033142">
    <property type="term" value="F:nuclear progesterone receptor binding"/>
    <property type="evidence" value="ECO:0000353"/>
    <property type="project" value="UniProtKB"/>
</dbReference>
<dbReference type="GO" id="GO:0042974">
    <property type="term" value="F:nuclear retinoic acid receptor binding"/>
    <property type="evidence" value="ECO:0000353"/>
    <property type="project" value="UniProtKB"/>
</dbReference>
<dbReference type="GO" id="GO:0046966">
    <property type="term" value="F:nuclear thyroid hormone receptor binding"/>
    <property type="evidence" value="ECO:0000353"/>
    <property type="project" value="UniProtKB"/>
</dbReference>
<dbReference type="GO" id="GO:0042975">
    <property type="term" value="F:peroxisome proliferator activated receptor binding"/>
    <property type="evidence" value="ECO:0000353"/>
    <property type="project" value="UniProtKB"/>
</dbReference>
<dbReference type="GO" id="GO:0042803">
    <property type="term" value="F:protein homodimerization activity"/>
    <property type="evidence" value="ECO:0000353"/>
    <property type="project" value="UniProtKB"/>
</dbReference>
<dbReference type="GO" id="GO:0016274">
    <property type="term" value="F:protein-arginine N-methyltransferase activity"/>
    <property type="evidence" value="ECO:0000250"/>
    <property type="project" value="UniProtKB"/>
</dbReference>
<dbReference type="GO" id="GO:0035242">
    <property type="term" value="F:protein-arginine omega-N asymmetric methyltransferase activity"/>
    <property type="evidence" value="ECO:0007669"/>
    <property type="project" value="UniProtKB-EC"/>
</dbReference>
<dbReference type="GO" id="GO:0044877">
    <property type="term" value="F:protein-containing complex binding"/>
    <property type="evidence" value="ECO:0000250"/>
    <property type="project" value="UniProtKB"/>
</dbReference>
<dbReference type="GO" id="GO:0003713">
    <property type="term" value="F:transcription coactivator activity"/>
    <property type="evidence" value="ECO:0000314"/>
    <property type="project" value="UniProtKB"/>
</dbReference>
<dbReference type="GO" id="GO:0006338">
    <property type="term" value="P:chromatin remodeling"/>
    <property type="evidence" value="ECO:0000318"/>
    <property type="project" value="GO_Central"/>
</dbReference>
<dbReference type="GO" id="GO:0048588">
    <property type="term" value="P:developmental cell growth"/>
    <property type="evidence" value="ECO:0000250"/>
    <property type="project" value="UniProtKB"/>
</dbReference>
<dbReference type="GO" id="GO:0045892">
    <property type="term" value="P:negative regulation of DNA-templated transcription"/>
    <property type="evidence" value="ECO:0000314"/>
    <property type="project" value="UniProtKB"/>
</dbReference>
<dbReference type="GO" id="GO:2000134">
    <property type="term" value="P:negative regulation of G1/S transition of mitotic cell cycle"/>
    <property type="evidence" value="ECO:0000250"/>
    <property type="project" value="UniProtKB"/>
</dbReference>
<dbReference type="GO" id="GO:0032088">
    <property type="term" value="P:negative regulation of NF-kappaB transcription factor activity"/>
    <property type="evidence" value="ECO:0000314"/>
    <property type="project" value="UniProtKB"/>
</dbReference>
<dbReference type="GO" id="GO:0043065">
    <property type="term" value="P:positive regulation of apoptotic process"/>
    <property type="evidence" value="ECO:0000316"/>
    <property type="project" value="UniProtKB"/>
</dbReference>
<dbReference type="GO" id="GO:0045893">
    <property type="term" value="P:positive regulation of DNA-templated transcription"/>
    <property type="evidence" value="ECO:0000314"/>
    <property type="project" value="UniProtKB"/>
</dbReference>
<dbReference type="GO" id="GO:0006479">
    <property type="term" value="P:protein methylation"/>
    <property type="evidence" value="ECO:0000304"/>
    <property type="project" value="ProtInc"/>
</dbReference>
<dbReference type="GO" id="GO:0060765">
    <property type="term" value="P:regulation of androgen receptor signaling pathway"/>
    <property type="evidence" value="ECO:0000314"/>
    <property type="project" value="UniProtKB"/>
</dbReference>
<dbReference type="GO" id="GO:0006355">
    <property type="term" value="P:regulation of DNA-templated transcription"/>
    <property type="evidence" value="ECO:0000318"/>
    <property type="project" value="GO_Central"/>
</dbReference>
<dbReference type="GO" id="GO:0007165">
    <property type="term" value="P:signal transduction"/>
    <property type="evidence" value="ECO:0000304"/>
    <property type="project" value="ProtInc"/>
</dbReference>
<dbReference type="CDD" id="cd02440">
    <property type="entry name" value="AdoMet_MTases"/>
    <property type="match status" value="1"/>
</dbReference>
<dbReference type="CDD" id="cd11806">
    <property type="entry name" value="SH3_PRMT2"/>
    <property type="match status" value="1"/>
</dbReference>
<dbReference type="FunFam" id="2.70.160.11:FF:000007">
    <property type="entry name" value="Protein arginine N-methyltransferase 2"/>
    <property type="match status" value="1"/>
</dbReference>
<dbReference type="FunFam" id="2.30.30.40:FF:000098">
    <property type="entry name" value="Protein arginine N-methyltransferase 2 isoform 1"/>
    <property type="match status" value="1"/>
</dbReference>
<dbReference type="FunFam" id="3.40.50.150:FF:000016">
    <property type="entry name" value="Protein arginine N-methyltransferase 6"/>
    <property type="match status" value="1"/>
</dbReference>
<dbReference type="Gene3D" id="2.70.160.11">
    <property type="entry name" value="Hnrnp arginine n-methyltransferase1"/>
    <property type="match status" value="1"/>
</dbReference>
<dbReference type="Gene3D" id="2.30.30.40">
    <property type="entry name" value="SH3 Domains"/>
    <property type="match status" value="1"/>
</dbReference>
<dbReference type="Gene3D" id="3.40.50.150">
    <property type="entry name" value="Vaccinia Virus protein VP39"/>
    <property type="match status" value="1"/>
</dbReference>
<dbReference type="InterPro" id="IPR025799">
    <property type="entry name" value="Arg_MeTrfase"/>
</dbReference>
<dbReference type="InterPro" id="IPR055135">
    <property type="entry name" value="PRMT_dom"/>
</dbReference>
<dbReference type="InterPro" id="IPR029063">
    <property type="entry name" value="SAM-dependent_MTases_sf"/>
</dbReference>
<dbReference type="InterPro" id="IPR036028">
    <property type="entry name" value="SH3-like_dom_sf"/>
</dbReference>
<dbReference type="InterPro" id="IPR001452">
    <property type="entry name" value="SH3_domain"/>
</dbReference>
<dbReference type="InterPro" id="IPR007848">
    <property type="entry name" value="Small_mtfrase_dom"/>
</dbReference>
<dbReference type="PANTHER" id="PTHR11006">
    <property type="entry name" value="PROTEIN ARGININE N-METHYLTRANSFERASE"/>
    <property type="match status" value="1"/>
</dbReference>
<dbReference type="PANTHER" id="PTHR11006:SF92">
    <property type="entry name" value="PROTEIN ARGININE N-METHYLTRANSFERASE 2"/>
    <property type="match status" value="1"/>
</dbReference>
<dbReference type="Pfam" id="PF05175">
    <property type="entry name" value="MTS"/>
    <property type="match status" value="1"/>
</dbReference>
<dbReference type="Pfam" id="PF22528">
    <property type="entry name" value="PRMT_C"/>
    <property type="match status" value="1"/>
</dbReference>
<dbReference type="Pfam" id="PF00018">
    <property type="entry name" value="SH3_1"/>
    <property type="match status" value="1"/>
</dbReference>
<dbReference type="PRINTS" id="PR00452">
    <property type="entry name" value="SH3DOMAIN"/>
</dbReference>
<dbReference type="SMART" id="SM00326">
    <property type="entry name" value="SH3"/>
    <property type="match status" value="1"/>
</dbReference>
<dbReference type="SUPFAM" id="SSF53335">
    <property type="entry name" value="S-adenosyl-L-methionine-dependent methyltransferases"/>
    <property type="match status" value="1"/>
</dbReference>
<dbReference type="SUPFAM" id="SSF50044">
    <property type="entry name" value="SH3-domain"/>
    <property type="match status" value="1"/>
</dbReference>
<dbReference type="PROSITE" id="PS51678">
    <property type="entry name" value="SAM_MT_PRMT"/>
    <property type="match status" value="1"/>
</dbReference>
<dbReference type="PROSITE" id="PS50002">
    <property type="entry name" value="SH3"/>
    <property type="match status" value="1"/>
</dbReference>
<accession>P55345</accession>
<accession>B7U630</accession>
<accession>B7U631</accession>
<accession>B7U632</accession>
<accession>P78350</accession>
<accession>Q498Y5</accession>
<accession>Q5U7D4</accession>
<accession>Q6FHF0</accession>
<accession>Q99781</accession>
<accession>Q9BW15</accession>
<accession>Q9UMC2</accession>